<proteinExistence type="inferred from homology"/>
<reference key="1">
    <citation type="submission" date="2002-07" db="EMBL/GenBank/DDBJ databases">
        <title>HCR gene orthologs in chimpanzee, pygmy chimpanzee, gorilla, and orangutan.</title>
        <authorList>
            <person name="Asumalahti K."/>
            <person name="Kere J."/>
        </authorList>
    </citation>
    <scope>NUCLEOTIDE SEQUENCE [GENOMIC DNA]</scope>
</reference>
<organism>
    <name type="scientific">Pan paniscus</name>
    <name type="common">Pygmy chimpanzee</name>
    <name type="synonym">Bonobo</name>
    <dbReference type="NCBI Taxonomy" id="9597"/>
    <lineage>
        <taxon>Eukaryota</taxon>
        <taxon>Metazoa</taxon>
        <taxon>Chordata</taxon>
        <taxon>Craniata</taxon>
        <taxon>Vertebrata</taxon>
        <taxon>Euteleostomi</taxon>
        <taxon>Mammalia</taxon>
        <taxon>Eutheria</taxon>
        <taxon>Euarchontoglires</taxon>
        <taxon>Primates</taxon>
        <taxon>Haplorrhini</taxon>
        <taxon>Catarrhini</taxon>
        <taxon>Hominidae</taxon>
        <taxon>Pan</taxon>
    </lineage>
</organism>
<accession>Q8HZ57</accession>
<protein>
    <recommendedName>
        <fullName>Coiled-coil alpha-helical rod protein 1</fullName>
    </recommendedName>
    <alternativeName>
        <fullName>Alpha-helical coiled-coil rod protein</fullName>
    </alternativeName>
</protein>
<feature type="chain" id="PRO_0000089418" description="Coiled-coil alpha-helical rod protein 1">
    <location>
        <begin position="1"/>
        <end position="782"/>
    </location>
</feature>
<feature type="region of interest" description="Disordered" evidence="3">
    <location>
        <begin position="62"/>
        <end position="82"/>
    </location>
</feature>
<feature type="region of interest" description="Disordered" evidence="3">
    <location>
        <begin position="182"/>
        <end position="218"/>
    </location>
</feature>
<feature type="coiled-coil region" evidence="2">
    <location>
        <begin position="82"/>
        <end position="314"/>
    </location>
</feature>
<feature type="coiled-coil region" evidence="2">
    <location>
        <begin position="344"/>
        <end position="437"/>
    </location>
</feature>
<feature type="coiled-coil region" evidence="2">
    <location>
        <begin position="498"/>
        <end position="691"/>
    </location>
</feature>
<feature type="compositionally biased region" description="Basic and acidic residues" evidence="3">
    <location>
        <begin position="62"/>
        <end position="74"/>
    </location>
</feature>
<feature type="compositionally biased region" description="Basic and acidic residues" evidence="3">
    <location>
        <begin position="208"/>
        <end position="218"/>
    </location>
</feature>
<name>CCHCR_PANPA</name>
<keyword id="KW-0175">Coiled coil</keyword>
<keyword id="KW-0963">Cytoplasm</keyword>
<keyword id="KW-0217">Developmental protein</keyword>
<keyword id="KW-0221">Differentiation</keyword>
<keyword id="KW-0539">Nucleus</keyword>
<keyword id="KW-1185">Reference proteome</keyword>
<dbReference type="EMBL" id="AY135831">
    <property type="protein sequence ID" value="AAN12282.1"/>
    <property type="molecule type" value="Genomic_DNA"/>
</dbReference>
<dbReference type="EMBL" id="AY135815">
    <property type="protein sequence ID" value="AAN12282.1"/>
    <property type="status" value="JOINED"/>
    <property type="molecule type" value="Genomic_DNA"/>
</dbReference>
<dbReference type="EMBL" id="AY135816">
    <property type="protein sequence ID" value="AAN12282.1"/>
    <property type="status" value="JOINED"/>
    <property type="molecule type" value="Genomic_DNA"/>
</dbReference>
<dbReference type="EMBL" id="AY135817">
    <property type="protein sequence ID" value="AAN12282.1"/>
    <property type="status" value="JOINED"/>
    <property type="molecule type" value="Genomic_DNA"/>
</dbReference>
<dbReference type="EMBL" id="AY135818">
    <property type="protein sequence ID" value="AAN12282.1"/>
    <property type="status" value="JOINED"/>
    <property type="molecule type" value="Genomic_DNA"/>
</dbReference>
<dbReference type="EMBL" id="AY135819">
    <property type="protein sequence ID" value="AAN12282.1"/>
    <property type="status" value="JOINED"/>
    <property type="molecule type" value="Genomic_DNA"/>
</dbReference>
<dbReference type="EMBL" id="AY135820">
    <property type="protein sequence ID" value="AAN12282.1"/>
    <property type="status" value="JOINED"/>
    <property type="molecule type" value="Genomic_DNA"/>
</dbReference>
<dbReference type="EMBL" id="AY135821">
    <property type="protein sequence ID" value="AAN12282.1"/>
    <property type="status" value="JOINED"/>
    <property type="molecule type" value="Genomic_DNA"/>
</dbReference>
<dbReference type="EMBL" id="AY135822">
    <property type="protein sequence ID" value="AAN12282.1"/>
    <property type="status" value="JOINED"/>
    <property type="molecule type" value="Genomic_DNA"/>
</dbReference>
<dbReference type="EMBL" id="AY135823">
    <property type="protein sequence ID" value="AAN12282.1"/>
    <property type="status" value="JOINED"/>
    <property type="molecule type" value="Genomic_DNA"/>
</dbReference>
<dbReference type="EMBL" id="AY135824">
    <property type="protein sequence ID" value="AAN12282.1"/>
    <property type="status" value="JOINED"/>
    <property type="molecule type" value="Genomic_DNA"/>
</dbReference>
<dbReference type="EMBL" id="AY135825">
    <property type="protein sequence ID" value="AAN12282.1"/>
    <property type="status" value="JOINED"/>
    <property type="molecule type" value="Genomic_DNA"/>
</dbReference>
<dbReference type="EMBL" id="AY135826">
    <property type="protein sequence ID" value="AAN12282.1"/>
    <property type="status" value="JOINED"/>
    <property type="molecule type" value="Genomic_DNA"/>
</dbReference>
<dbReference type="EMBL" id="AY135827">
    <property type="protein sequence ID" value="AAN12282.1"/>
    <property type="status" value="JOINED"/>
    <property type="molecule type" value="Genomic_DNA"/>
</dbReference>
<dbReference type="EMBL" id="AY135828">
    <property type="protein sequence ID" value="AAN12282.1"/>
    <property type="status" value="JOINED"/>
    <property type="molecule type" value="Genomic_DNA"/>
</dbReference>
<dbReference type="EMBL" id="AY135829">
    <property type="protein sequence ID" value="AAN12282.1"/>
    <property type="status" value="JOINED"/>
    <property type="molecule type" value="Genomic_DNA"/>
</dbReference>
<dbReference type="EMBL" id="AY135830">
    <property type="protein sequence ID" value="AAN12282.1"/>
    <property type="status" value="JOINED"/>
    <property type="molecule type" value="Genomic_DNA"/>
</dbReference>
<dbReference type="SMR" id="Q8HZ57"/>
<dbReference type="STRING" id="9597.ENSPPAP00000009877"/>
<dbReference type="eggNOG" id="KOG3802">
    <property type="taxonomic scope" value="Eukaryota"/>
</dbReference>
<dbReference type="Proteomes" id="UP000240080">
    <property type="component" value="Unplaced"/>
</dbReference>
<dbReference type="GO" id="GO:0005814">
    <property type="term" value="C:centriole"/>
    <property type="evidence" value="ECO:0000250"/>
    <property type="project" value="UniProtKB"/>
</dbReference>
<dbReference type="GO" id="GO:0005737">
    <property type="term" value="C:cytoplasm"/>
    <property type="evidence" value="ECO:0007669"/>
    <property type="project" value="UniProtKB-SubCell"/>
</dbReference>
<dbReference type="GO" id="GO:0005634">
    <property type="term" value="C:nucleus"/>
    <property type="evidence" value="ECO:0007669"/>
    <property type="project" value="UniProtKB-SubCell"/>
</dbReference>
<dbReference type="GO" id="GO:0030154">
    <property type="term" value="P:cell differentiation"/>
    <property type="evidence" value="ECO:0007669"/>
    <property type="project" value="UniProtKB-KW"/>
</dbReference>
<dbReference type="GO" id="GO:0006611">
    <property type="term" value="P:protein export from nucleus"/>
    <property type="evidence" value="ECO:0007669"/>
    <property type="project" value="TreeGrafter"/>
</dbReference>
<dbReference type="InterPro" id="IPR009800">
    <property type="entry name" value="HCR"/>
</dbReference>
<dbReference type="PANTHER" id="PTHR46822">
    <property type="entry name" value="COILED-COIL ALPHA-HELICAL ROD PROTEIN 1"/>
    <property type="match status" value="1"/>
</dbReference>
<dbReference type="PANTHER" id="PTHR46822:SF1">
    <property type="entry name" value="COILED-COIL ALPHA-HELICAL ROD PROTEIN 1"/>
    <property type="match status" value="1"/>
</dbReference>
<dbReference type="Pfam" id="PF07111">
    <property type="entry name" value="HCR"/>
    <property type="match status" value="1"/>
</dbReference>
<evidence type="ECO:0000250" key="1"/>
<evidence type="ECO:0000255" key="2"/>
<evidence type="ECO:0000256" key="3">
    <source>
        <dbReference type="SAM" id="MobiDB-lite"/>
    </source>
</evidence>
<sequence length="782" mass="88688">MFPPSGSTGLIPPSHFQARPLSTLPRMAPTWLSDIPLVQPPGHQDVSERRLDTQRPQVTMWERDVSSDRQEPGRRGRSWGLEGSQALSQQAEVIARQLQELRRLEEEVRLLRETSLQQKMRLEAQAMELEALARAEKAGRAEAEGLRAALAGAEVVRKNLEEGSQRELEEVQRLHQEQLSSLTQAHEEALSSLTSKAEGLEKSLSSLETRRAGEAKELAEAQREAELLRKQLSKTQEDLEAQVTLVENLRKYVGEQVPSEVHSQTWELERQKLLETMQHLQEDRDSLQATVELLQVRVQSLTHILALQEEELTRKVQPSDSLEPEFTRKCQSLLNRWREKVFALMVQLKAQELEHSDSVKQLKGQVASLQEKVTSQSQEQAILQRSLQDKAAEVEVERMGAKGLQLELSRAQEARRRWQQQTASAEEQLRLVVNAVSSSQIWLETTMAKVEEAAAQLPSLNNRLSYAVRKVHTIRGLIARKLALAQLRQESCPLPPPVADVSLELQQLREERNRLDAELQLSARLIQQEVGRAREQGEAERQQLSKVAQQLERELQQTQESLASLGLQLEVARQGQQESTEEAASLRQELTQQQELYGQALQEKVAEVETRLREQLSDTERRLNEARREHAKAVVSLRQIQRRAAQEKERSQELRRLQEEARKEEGQRLARRLQELERDKNLMLATLQQEGLLSRYKQQRLLTVLPSLLDKKKSVVSSPRPPECSASAPIAAAVPTRESIKGSLSVLLDDLQGLSEAISKEEAVCQGDNLDRCSSSNPQMSS</sequence>
<comment type="function">
    <text evidence="1">May be a regulator of keratinocyte proliferation or differentiation.</text>
</comment>
<comment type="subcellular location">
    <subcellularLocation>
        <location evidence="1">Cytoplasm</location>
    </subcellularLocation>
    <subcellularLocation>
        <location evidence="1">Nucleus</location>
    </subcellularLocation>
</comment>
<gene>
    <name type="primary">CCHCR1</name>
    <name type="synonym">HCR</name>
</gene>